<name>YAJQ_SALHS</name>
<comment type="function">
    <text evidence="1">Nucleotide-binding protein.</text>
</comment>
<comment type="similarity">
    <text evidence="1">Belongs to the YajQ family.</text>
</comment>
<keyword id="KW-0547">Nucleotide-binding</keyword>
<reference key="1">
    <citation type="journal article" date="2011" name="J. Bacteriol.">
        <title>Comparative genomics of 28 Salmonella enterica isolates: evidence for CRISPR-mediated adaptive sublineage evolution.</title>
        <authorList>
            <person name="Fricke W.F."/>
            <person name="Mammel M.K."/>
            <person name="McDermott P.F."/>
            <person name="Tartera C."/>
            <person name="White D.G."/>
            <person name="Leclerc J.E."/>
            <person name="Ravel J."/>
            <person name="Cebula T.A."/>
        </authorList>
    </citation>
    <scope>NUCLEOTIDE SEQUENCE [LARGE SCALE GENOMIC DNA]</scope>
    <source>
        <strain>SL476</strain>
    </source>
</reference>
<organism>
    <name type="scientific">Salmonella heidelberg (strain SL476)</name>
    <dbReference type="NCBI Taxonomy" id="454169"/>
    <lineage>
        <taxon>Bacteria</taxon>
        <taxon>Pseudomonadati</taxon>
        <taxon>Pseudomonadota</taxon>
        <taxon>Gammaproteobacteria</taxon>
        <taxon>Enterobacterales</taxon>
        <taxon>Enterobacteriaceae</taxon>
        <taxon>Salmonella</taxon>
    </lineage>
</organism>
<protein>
    <recommendedName>
        <fullName evidence="1">Nucleotide-binding protein YajQ</fullName>
    </recommendedName>
</protein>
<proteinExistence type="inferred from homology"/>
<sequence>MPSFDIVSEVDLQEARNGVDNAVREVESRFDFRGVEATIELNDANKTIKVLSESDFQVNQLLDILRAKLLKRGIEGASLDVSDEFVHSGKTWYVEAKLKQGIESAVQKKIVKLIKDSKLKVQAQIQGEEIRVTGKSRDDLQSVMALVRGGDLGQPFQFKNFRD</sequence>
<feature type="chain" id="PRO_1000130647" description="Nucleotide-binding protein YajQ">
    <location>
        <begin position="1"/>
        <end position="163"/>
    </location>
</feature>
<evidence type="ECO:0000255" key="1">
    <source>
        <dbReference type="HAMAP-Rule" id="MF_00632"/>
    </source>
</evidence>
<gene>
    <name evidence="1" type="primary">yajQ</name>
    <name type="ordered locus">SeHA_C0537</name>
</gene>
<accession>B4T9D0</accession>
<dbReference type="EMBL" id="CP001120">
    <property type="protein sequence ID" value="ACF67583.1"/>
    <property type="molecule type" value="Genomic_DNA"/>
</dbReference>
<dbReference type="RefSeq" id="WP_001138914.1">
    <property type="nucleotide sequence ID" value="NC_011083.1"/>
</dbReference>
<dbReference type="SMR" id="B4T9D0"/>
<dbReference type="KEGG" id="seh:SeHA_C0537"/>
<dbReference type="HOGENOM" id="CLU_099839_1_0_6"/>
<dbReference type="Proteomes" id="UP000001866">
    <property type="component" value="Chromosome"/>
</dbReference>
<dbReference type="GO" id="GO:0005829">
    <property type="term" value="C:cytosol"/>
    <property type="evidence" value="ECO:0007669"/>
    <property type="project" value="TreeGrafter"/>
</dbReference>
<dbReference type="GO" id="GO:0000166">
    <property type="term" value="F:nucleotide binding"/>
    <property type="evidence" value="ECO:0007669"/>
    <property type="project" value="TreeGrafter"/>
</dbReference>
<dbReference type="CDD" id="cd11740">
    <property type="entry name" value="YajQ_like"/>
    <property type="match status" value="1"/>
</dbReference>
<dbReference type="FunFam" id="3.30.70.860:FF:000001">
    <property type="entry name" value="UPF0234 protein YajQ"/>
    <property type="match status" value="1"/>
</dbReference>
<dbReference type="FunFam" id="3.30.70.990:FF:000001">
    <property type="entry name" value="UPF0234 protein YajQ"/>
    <property type="match status" value="1"/>
</dbReference>
<dbReference type="Gene3D" id="3.30.70.860">
    <property type="match status" value="1"/>
</dbReference>
<dbReference type="Gene3D" id="3.30.70.990">
    <property type="entry name" value="YajQ-like, domain 2"/>
    <property type="match status" value="1"/>
</dbReference>
<dbReference type="HAMAP" id="MF_00632">
    <property type="entry name" value="YajQ"/>
    <property type="match status" value="1"/>
</dbReference>
<dbReference type="InterPro" id="IPR007551">
    <property type="entry name" value="DUF520"/>
</dbReference>
<dbReference type="InterPro" id="IPR035571">
    <property type="entry name" value="UPF0234-like_C"/>
</dbReference>
<dbReference type="InterPro" id="IPR035570">
    <property type="entry name" value="UPF0234_N"/>
</dbReference>
<dbReference type="InterPro" id="IPR036183">
    <property type="entry name" value="YajQ-like_sf"/>
</dbReference>
<dbReference type="NCBIfam" id="NF003819">
    <property type="entry name" value="PRK05412.1"/>
    <property type="match status" value="1"/>
</dbReference>
<dbReference type="PANTHER" id="PTHR30476">
    <property type="entry name" value="UPF0234 PROTEIN YAJQ"/>
    <property type="match status" value="1"/>
</dbReference>
<dbReference type="PANTHER" id="PTHR30476:SF0">
    <property type="entry name" value="UPF0234 PROTEIN YAJQ"/>
    <property type="match status" value="1"/>
</dbReference>
<dbReference type="Pfam" id="PF04461">
    <property type="entry name" value="DUF520"/>
    <property type="match status" value="1"/>
</dbReference>
<dbReference type="SUPFAM" id="SSF89963">
    <property type="entry name" value="YajQ-like"/>
    <property type="match status" value="2"/>
</dbReference>